<sequence length="251" mass="27564">MHISPDQLIFWEYGFVKLNGTIIYTWLLMLLLAVGSKTITKRLSRGEERSRWQNLLEVIIITIQKQISEVGLRQPRTYLPFLGTLFVFVAVANLFAVFPGYEPPTGSLSTTVALAICVFVAVPFYGIREQGLRRYLQSYLKPVPLLLPFNILGEFTRTLALAVRLFGNMMSGTMILAIMLIITPFIFPVVMGVLHLLIGGVQAYIFSILATVYIAAATSDNGENAGASDDEGGEDAKSACAAGGKICKHKP</sequence>
<comment type="function">
    <text evidence="1">Key component of the proton channel; it plays a direct role in the translocation of protons across the membrane.</text>
</comment>
<comment type="subunit">
    <text evidence="1">F-type ATPases have 2 components, CF(1) - the catalytic core - and CF(0) - the membrane proton channel. CF(1) has five subunits: alpha(3), beta(3), gamma(1), delta(1), epsilon(1). CF(0) has three main subunits: a(1), b(2) and c(9-12). The alpha and beta chains form an alternating ring which encloses part of the gamma chain. CF(1) is attached to CF(0) by a central stalk formed by the gamma and epsilon chains, while a peripheral stalk is formed by the delta and b chains.</text>
</comment>
<comment type="subcellular location">
    <subcellularLocation>
        <location evidence="1">Cell inner membrane</location>
        <topology evidence="1">Multi-pass membrane protein</topology>
    </subcellularLocation>
</comment>
<comment type="similarity">
    <text evidence="1">Belongs to the ATPase A chain family.</text>
</comment>
<protein>
    <recommendedName>
        <fullName evidence="1">ATP synthase subunit a</fullName>
    </recommendedName>
    <alternativeName>
        <fullName evidence="1">ATP synthase F0 sector subunit a</fullName>
    </alternativeName>
    <alternativeName>
        <fullName evidence="1">F-ATPase subunit 6</fullName>
    </alternativeName>
</protein>
<organism>
    <name type="scientific">Nitrosospira multiformis (strain ATCC 25196 / NCIMB 11849 / C 71)</name>
    <dbReference type="NCBI Taxonomy" id="323848"/>
    <lineage>
        <taxon>Bacteria</taxon>
        <taxon>Pseudomonadati</taxon>
        <taxon>Pseudomonadota</taxon>
        <taxon>Betaproteobacteria</taxon>
        <taxon>Nitrosomonadales</taxon>
        <taxon>Nitrosomonadaceae</taxon>
        <taxon>Nitrosospira</taxon>
    </lineage>
</organism>
<keyword id="KW-0066">ATP synthesis</keyword>
<keyword id="KW-0997">Cell inner membrane</keyword>
<keyword id="KW-1003">Cell membrane</keyword>
<keyword id="KW-0138">CF(0)</keyword>
<keyword id="KW-0375">Hydrogen ion transport</keyword>
<keyword id="KW-0406">Ion transport</keyword>
<keyword id="KW-0472">Membrane</keyword>
<keyword id="KW-1185">Reference proteome</keyword>
<keyword id="KW-0812">Transmembrane</keyword>
<keyword id="KW-1133">Transmembrane helix</keyword>
<keyword id="KW-0813">Transport</keyword>
<dbReference type="EMBL" id="CP000103">
    <property type="protein sequence ID" value="ABB74955.1"/>
    <property type="molecule type" value="Genomic_DNA"/>
</dbReference>
<dbReference type="RefSeq" id="WP_011380978.1">
    <property type="nucleotide sequence ID" value="NC_007614.1"/>
</dbReference>
<dbReference type="SMR" id="Q2Y8G6"/>
<dbReference type="STRING" id="323848.Nmul_A1657"/>
<dbReference type="KEGG" id="nmu:Nmul_A1657"/>
<dbReference type="eggNOG" id="COG0356">
    <property type="taxonomic scope" value="Bacteria"/>
</dbReference>
<dbReference type="HOGENOM" id="CLU_041018_2_5_4"/>
<dbReference type="OrthoDB" id="9789241at2"/>
<dbReference type="Proteomes" id="UP000002718">
    <property type="component" value="Chromosome"/>
</dbReference>
<dbReference type="GO" id="GO:0005886">
    <property type="term" value="C:plasma membrane"/>
    <property type="evidence" value="ECO:0007669"/>
    <property type="project" value="UniProtKB-SubCell"/>
</dbReference>
<dbReference type="GO" id="GO:0045259">
    <property type="term" value="C:proton-transporting ATP synthase complex"/>
    <property type="evidence" value="ECO:0007669"/>
    <property type="project" value="UniProtKB-KW"/>
</dbReference>
<dbReference type="GO" id="GO:0046933">
    <property type="term" value="F:proton-transporting ATP synthase activity, rotational mechanism"/>
    <property type="evidence" value="ECO:0007669"/>
    <property type="project" value="UniProtKB-UniRule"/>
</dbReference>
<dbReference type="GO" id="GO:0042777">
    <property type="term" value="P:proton motive force-driven plasma membrane ATP synthesis"/>
    <property type="evidence" value="ECO:0007669"/>
    <property type="project" value="TreeGrafter"/>
</dbReference>
<dbReference type="CDD" id="cd00310">
    <property type="entry name" value="ATP-synt_Fo_a_6"/>
    <property type="match status" value="1"/>
</dbReference>
<dbReference type="Gene3D" id="1.20.120.220">
    <property type="entry name" value="ATP synthase, F0 complex, subunit A"/>
    <property type="match status" value="1"/>
</dbReference>
<dbReference type="HAMAP" id="MF_01393">
    <property type="entry name" value="ATP_synth_a_bact"/>
    <property type="match status" value="1"/>
</dbReference>
<dbReference type="InterPro" id="IPR017692">
    <property type="entry name" value="Alt_ATP_synth_F0_Asu"/>
</dbReference>
<dbReference type="InterPro" id="IPR045082">
    <property type="entry name" value="ATP_syn_F0_a_bact/chloroplast"/>
</dbReference>
<dbReference type="InterPro" id="IPR000568">
    <property type="entry name" value="ATP_synth_F0_asu"/>
</dbReference>
<dbReference type="InterPro" id="IPR023011">
    <property type="entry name" value="ATP_synth_F0_asu_AS"/>
</dbReference>
<dbReference type="InterPro" id="IPR035908">
    <property type="entry name" value="F0_ATP_A_sf"/>
</dbReference>
<dbReference type="NCBIfam" id="TIGR03306">
    <property type="entry name" value="altF1_A"/>
    <property type="match status" value="1"/>
</dbReference>
<dbReference type="NCBIfam" id="TIGR01131">
    <property type="entry name" value="ATP_synt_6_or_A"/>
    <property type="match status" value="1"/>
</dbReference>
<dbReference type="NCBIfam" id="NF004481">
    <property type="entry name" value="PRK05815.2-3"/>
    <property type="match status" value="1"/>
</dbReference>
<dbReference type="PANTHER" id="PTHR42823">
    <property type="entry name" value="ATP SYNTHASE SUBUNIT A, CHLOROPLASTIC"/>
    <property type="match status" value="1"/>
</dbReference>
<dbReference type="PANTHER" id="PTHR42823:SF3">
    <property type="entry name" value="ATP SYNTHASE SUBUNIT A, CHLOROPLASTIC"/>
    <property type="match status" value="1"/>
</dbReference>
<dbReference type="Pfam" id="PF00119">
    <property type="entry name" value="ATP-synt_A"/>
    <property type="match status" value="1"/>
</dbReference>
<dbReference type="PRINTS" id="PR00123">
    <property type="entry name" value="ATPASEA"/>
</dbReference>
<dbReference type="SUPFAM" id="SSF81336">
    <property type="entry name" value="F1F0 ATP synthase subunit A"/>
    <property type="match status" value="1"/>
</dbReference>
<dbReference type="PROSITE" id="PS00449">
    <property type="entry name" value="ATPASE_A"/>
    <property type="match status" value="1"/>
</dbReference>
<accession>Q2Y8G6</accession>
<reference key="1">
    <citation type="submission" date="2005-08" db="EMBL/GenBank/DDBJ databases">
        <title>Complete sequence of chromosome 1 of Nitrosospira multiformis ATCC 25196.</title>
        <authorList>
            <person name="Copeland A."/>
            <person name="Lucas S."/>
            <person name="Lapidus A."/>
            <person name="Barry K."/>
            <person name="Detter J.C."/>
            <person name="Glavina T."/>
            <person name="Hammon N."/>
            <person name="Israni S."/>
            <person name="Pitluck S."/>
            <person name="Chain P."/>
            <person name="Malfatti S."/>
            <person name="Shin M."/>
            <person name="Vergez L."/>
            <person name="Schmutz J."/>
            <person name="Larimer F."/>
            <person name="Land M."/>
            <person name="Hauser L."/>
            <person name="Kyrpides N."/>
            <person name="Lykidis A."/>
            <person name="Richardson P."/>
        </authorList>
    </citation>
    <scope>NUCLEOTIDE SEQUENCE [LARGE SCALE GENOMIC DNA]</scope>
    <source>
        <strain>ATCC 25196 / NCIMB 11849 / C 71</strain>
    </source>
</reference>
<evidence type="ECO:0000255" key="1">
    <source>
        <dbReference type="HAMAP-Rule" id="MF_01393"/>
    </source>
</evidence>
<evidence type="ECO:0000256" key="2">
    <source>
        <dbReference type="SAM" id="MobiDB-lite"/>
    </source>
</evidence>
<name>ATP6_NITMU</name>
<feature type="chain" id="PRO_0000362356" description="ATP synthase subunit a">
    <location>
        <begin position="1"/>
        <end position="251"/>
    </location>
</feature>
<feature type="transmembrane region" description="Helical" evidence="1">
    <location>
        <begin position="14"/>
        <end position="34"/>
    </location>
</feature>
<feature type="transmembrane region" description="Helical" evidence="1">
    <location>
        <begin position="78"/>
        <end position="98"/>
    </location>
</feature>
<feature type="transmembrane region" description="Helical" evidence="1">
    <location>
        <begin position="107"/>
        <end position="127"/>
    </location>
</feature>
<feature type="transmembrane region" description="Helical" evidence="1">
    <location>
        <begin position="174"/>
        <end position="194"/>
    </location>
</feature>
<feature type="transmembrane region" description="Helical" evidence="1">
    <location>
        <begin position="196"/>
        <end position="216"/>
    </location>
</feature>
<feature type="region of interest" description="Disordered" evidence="2">
    <location>
        <begin position="224"/>
        <end position="251"/>
    </location>
</feature>
<gene>
    <name evidence="1" type="primary">atpB</name>
    <name type="ordered locus">Nmul_A1657</name>
</gene>
<proteinExistence type="inferred from homology"/>